<sequence>MKFSQSLIALAACFLPLIAAAPEEAQHAKIRSPGAQDIILDSYIVVFNKGVNDADIESEFASVSHILSKRRPAHKGVGHKYNITGFKGYQIETDTGSIGEIAASPLVAWIERDGKVQANALETRSGATWGLGRISHKATGSNSYVYDSSAGSGSTVYVVDSGIYIEHSEFEGRAKWGANYISGSPDTDENGHGTHCAGTIAGATYGVASKANLVAVKVLDGDGSGSNSGVIAGINFVGQNGKDGKSVLSMSLGGSYSAALNSAVESTISNGVTVVVAAGNDGADASNYSPASAKNAITVGAVDSTDTRADFSNYGSVLDVFAPGVDVKSAWIGSKSASNTISGTSMATPHVAGLAAYLIGLGGLSSPAAVASKIASIGIQGSVKDPKGSVNLIAYNGNGA</sequence>
<dbReference type="EC" id="3.4.21.-" evidence="9"/>
<dbReference type="EMBL" id="GL573328">
    <property type="protein sequence ID" value="ELR03877.1"/>
    <property type="molecule type" value="Genomic_DNA"/>
</dbReference>
<dbReference type="RefSeq" id="XP_012744855.1">
    <property type="nucleotide sequence ID" value="XM_012889401.1"/>
</dbReference>
<dbReference type="SMR" id="L8FSM5"/>
<dbReference type="STRING" id="658429.L8FSM5"/>
<dbReference type="GlyCosmos" id="L8FSM5">
    <property type="glycosylation" value="1 site, No reported glycans"/>
</dbReference>
<dbReference type="VEuPathDB" id="FungiDB:GMDG_06417"/>
<dbReference type="HOGENOM" id="CLU_011263_1_4_1"/>
<dbReference type="InParanoid" id="L8FSM5"/>
<dbReference type="OrthoDB" id="11253at34379"/>
<dbReference type="Proteomes" id="UP000011064">
    <property type="component" value="Unassembled WGS sequence"/>
</dbReference>
<dbReference type="GO" id="GO:0005576">
    <property type="term" value="C:extracellular region"/>
    <property type="evidence" value="ECO:0007669"/>
    <property type="project" value="UniProtKB-SubCell"/>
</dbReference>
<dbReference type="GO" id="GO:0004252">
    <property type="term" value="F:serine-type endopeptidase activity"/>
    <property type="evidence" value="ECO:0007669"/>
    <property type="project" value="InterPro"/>
</dbReference>
<dbReference type="GO" id="GO:0006508">
    <property type="term" value="P:proteolysis"/>
    <property type="evidence" value="ECO:0007669"/>
    <property type="project" value="UniProtKB-KW"/>
</dbReference>
<dbReference type="CDD" id="cd04077">
    <property type="entry name" value="Peptidases_S8_PCSK9_ProteinaseK_like"/>
    <property type="match status" value="1"/>
</dbReference>
<dbReference type="FunFam" id="3.40.50.200:FF:000014">
    <property type="entry name" value="Proteinase K"/>
    <property type="match status" value="1"/>
</dbReference>
<dbReference type="Gene3D" id="3.30.70.80">
    <property type="entry name" value="Peptidase S8 propeptide/proteinase inhibitor I9"/>
    <property type="match status" value="1"/>
</dbReference>
<dbReference type="Gene3D" id="3.40.50.200">
    <property type="entry name" value="Peptidase S8/S53 domain"/>
    <property type="match status" value="1"/>
</dbReference>
<dbReference type="InterPro" id="IPR034193">
    <property type="entry name" value="PCSK9_ProteinaseK-like"/>
</dbReference>
<dbReference type="InterPro" id="IPR000209">
    <property type="entry name" value="Peptidase_S8/S53_dom"/>
</dbReference>
<dbReference type="InterPro" id="IPR036852">
    <property type="entry name" value="Peptidase_S8/S53_dom_sf"/>
</dbReference>
<dbReference type="InterPro" id="IPR023827">
    <property type="entry name" value="Peptidase_S8_Asp-AS"/>
</dbReference>
<dbReference type="InterPro" id="IPR022398">
    <property type="entry name" value="Peptidase_S8_His-AS"/>
</dbReference>
<dbReference type="InterPro" id="IPR023828">
    <property type="entry name" value="Peptidase_S8_Ser-AS"/>
</dbReference>
<dbReference type="InterPro" id="IPR050131">
    <property type="entry name" value="Peptidase_S8_subtilisin-like"/>
</dbReference>
<dbReference type="InterPro" id="IPR015500">
    <property type="entry name" value="Peptidase_S8_subtilisin-rel"/>
</dbReference>
<dbReference type="InterPro" id="IPR010259">
    <property type="entry name" value="S8pro/Inhibitor_I9"/>
</dbReference>
<dbReference type="InterPro" id="IPR037045">
    <property type="entry name" value="S8pro/Inhibitor_I9_sf"/>
</dbReference>
<dbReference type="PANTHER" id="PTHR43806:SF11">
    <property type="entry name" value="CEREVISIN-RELATED"/>
    <property type="match status" value="1"/>
</dbReference>
<dbReference type="PANTHER" id="PTHR43806">
    <property type="entry name" value="PEPTIDASE S8"/>
    <property type="match status" value="1"/>
</dbReference>
<dbReference type="Pfam" id="PF05922">
    <property type="entry name" value="Inhibitor_I9"/>
    <property type="match status" value="1"/>
</dbReference>
<dbReference type="Pfam" id="PF00082">
    <property type="entry name" value="Peptidase_S8"/>
    <property type="match status" value="1"/>
</dbReference>
<dbReference type="PRINTS" id="PR00723">
    <property type="entry name" value="SUBTILISIN"/>
</dbReference>
<dbReference type="SUPFAM" id="SSF54897">
    <property type="entry name" value="Protease propeptides/inhibitors"/>
    <property type="match status" value="1"/>
</dbReference>
<dbReference type="SUPFAM" id="SSF52743">
    <property type="entry name" value="Subtilisin-like"/>
    <property type="match status" value="1"/>
</dbReference>
<dbReference type="PROSITE" id="PS51892">
    <property type="entry name" value="SUBTILASE"/>
    <property type="match status" value="1"/>
</dbReference>
<dbReference type="PROSITE" id="PS00136">
    <property type="entry name" value="SUBTILASE_ASP"/>
    <property type="match status" value="1"/>
</dbReference>
<dbReference type="PROSITE" id="PS00137">
    <property type="entry name" value="SUBTILASE_HIS"/>
    <property type="match status" value="1"/>
</dbReference>
<dbReference type="PROSITE" id="PS00138">
    <property type="entry name" value="SUBTILASE_SER"/>
    <property type="match status" value="1"/>
</dbReference>
<accession>L8FSM5</accession>
<comment type="function">
    <text evidence="1 5">Major secreted subtilisin-like serine endopeptidase. Preferentially cleaves substrates containing hydrophobic residues at P4, positively charged residues at P3, small or flexible residues at P2, and large, bulky residues at P1. Mediates the degradation of collagen, the major structural protein in the mammalian host. Degrades the nonhelical regions of collagen that function in the cross-linking of the helical components (PubMed:25944934). May function as virulence factor involved in epidermal wing necrosis observed in white nose syndrome (WNS) in bats (By similarity).</text>
</comment>
<comment type="activity regulation">
    <text evidence="5">Potently inhibited by the serine peptidase inhibitor chymostatin. Also inhibited by antpain and PMSF.</text>
</comment>
<comment type="biophysicochemical properties">
    <phDependence>
        <text evidence="5">Optimum pH is 9-10.</text>
    </phDependence>
    <temperatureDependence>
        <text>Optimum temperature is 20-30 degrees Celsius.</text>
    </temperatureDependence>
</comment>
<comment type="subcellular location">
    <subcellularLocation>
        <location evidence="5">Secreted</location>
    </subcellularLocation>
</comment>
<comment type="similarity">
    <text evidence="8">Belongs to the peptidase S8 family.</text>
</comment>
<gene>
    <name evidence="6" type="primary">SP2</name>
    <name type="ORF">GMDG_06417</name>
</gene>
<reference key="1">
    <citation type="submission" date="2010-09" db="EMBL/GenBank/DDBJ databases">
        <title>The genome sequence of Geomyces destructans 20631-21.</title>
        <authorList>
            <consortium name="The Broad Institute Genome Sequencing Platform"/>
            <person name="Cuomo C.A."/>
            <person name="Blehert D.S."/>
            <person name="Lorch J.M."/>
            <person name="Young S.K."/>
            <person name="Zeng Q."/>
            <person name="Gargeya S."/>
            <person name="Fitzgerald M."/>
            <person name="Haas B."/>
            <person name="Abouelleil A."/>
            <person name="Alvarado L."/>
            <person name="Arachchi H.M."/>
            <person name="Berlin A."/>
            <person name="Brown A."/>
            <person name="Chapman S.B."/>
            <person name="Chen Z."/>
            <person name="Dunbar C."/>
            <person name="Freedman E."/>
            <person name="Gearin G."/>
            <person name="Gellesch M."/>
            <person name="Goldberg J."/>
            <person name="Griggs A."/>
            <person name="Gujja S."/>
            <person name="Heiman D."/>
            <person name="Howarth C."/>
            <person name="Larson L."/>
            <person name="Lui A."/>
            <person name="MacDonald P.J.P."/>
            <person name="Montmayeur A."/>
            <person name="Murphy C."/>
            <person name="Neiman D."/>
            <person name="Pearson M."/>
            <person name="Priest M."/>
            <person name="Roberts A."/>
            <person name="Saif S."/>
            <person name="Shea T."/>
            <person name="Shenoy N."/>
            <person name="Sisk P."/>
            <person name="Stolte C."/>
            <person name="Sykes S."/>
            <person name="Wortman J."/>
            <person name="Nusbaum C."/>
            <person name="Birren B."/>
        </authorList>
    </citation>
    <scope>NUCLEOTIDE SEQUENCE [LARGE SCALE GENOMIC DNA]</scope>
    <source>
        <strain>ATCC MYA-4855 / 20631-21</strain>
    </source>
</reference>
<reference key="2">
    <citation type="journal article" date="2015" name="Proc. Natl. Acad. Sci. U.S.A.">
        <title>Destructin-1 is a collagen-degrading endopeptidase secreted by Pseudogymnoascus destructans, the causative agent of white-nose syndrome.</title>
        <authorList>
            <person name="O'Donoghue A.J."/>
            <person name="Knudsen G.M."/>
            <person name="Beekman C."/>
            <person name="Perry J.A."/>
            <person name="Johnson A.D."/>
            <person name="DeRisi J.L."/>
            <person name="Craik C.S."/>
            <person name="Bennett R.J."/>
        </authorList>
    </citation>
    <scope>PROTEIN SEQUENCE OF N-TERMINUS</scope>
    <scope>PROTEOLYTIC CLEAVAGE</scope>
    <scope>FUNCTION</scope>
    <scope>CATALYTIC ACTIVITY</scope>
    <scope>BIOPHYSICOCHEMICAL PROPERTIES</scope>
    <scope>ACTIVITY REGULATION</scope>
    <scope>SUBCELLULAR LOCATION</scope>
    <scope>IDENTIFICATION BY MASS SPECTROMETRY</scope>
</reference>
<reference key="3">
    <citation type="journal article" date="2015" name="Proc. Natl. Acad. Sci. U.S.A.">
        <authorList>
            <person name="O'Donoghue A.J."/>
            <person name="Knudsen G.M."/>
            <person name="Beekman C."/>
            <person name="Perry J.A."/>
            <person name="Johnson A.D."/>
            <person name="DeRisi J.L."/>
            <person name="Craik C.S."/>
            <person name="Bennett R.J."/>
        </authorList>
    </citation>
    <scope>ERRATUM OF PUBMED:25944934</scope>
</reference>
<reference key="4">
    <citation type="journal article" date="2015" name="PLoS ONE">
        <title>Isolation and identification of an extracellular subtilisin-like serine protease secreted by the bat pathogen Pseudogymnoascus destructans.</title>
        <authorList>
            <person name="Pannkuk E.L."/>
            <person name="Risch T.S."/>
            <person name="Savary B.J."/>
        </authorList>
    </citation>
    <scope>GENE NAME</scope>
</reference>
<organism>
    <name type="scientific">Pseudogymnoascus destructans (strain ATCC MYA-4855 / 20631-21)</name>
    <name type="common">Bat white-nose syndrome fungus</name>
    <name type="synonym">Geomyces destructans</name>
    <dbReference type="NCBI Taxonomy" id="658429"/>
    <lineage>
        <taxon>Eukaryota</taxon>
        <taxon>Fungi</taxon>
        <taxon>Dikarya</taxon>
        <taxon>Ascomycota</taxon>
        <taxon>Pezizomycotina</taxon>
        <taxon>Leotiomycetes</taxon>
        <taxon>Thelebolales</taxon>
        <taxon>Thelebolaceae</taxon>
        <taxon>Pseudogymnoascus</taxon>
    </lineage>
</organism>
<proteinExistence type="evidence at protein level"/>
<evidence type="ECO:0000250" key="1">
    <source>
        <dbReference type="UniProtKB" id="L8G6I7"/>
    </source>
</evidence>
<evidence type="ECO:0000255" key="2"/>
<evidence type="ECO:0000255" key="3">
    <source>
        <dbReference type="PROSITE-ProRule" id="PRU00498"/>
    </source>
</evidence>
<evidence type="ECO:0000255" key="4">
    <source>
        <dbReference type="PROSITE-ProRule" id="PRU01240"/>
    </source>
</evidence>
<evidence type="ECO:0000269" key="5">
    <source>
    </source>
</evidence>
<evidence type="ECO:0000303" key="6">
    <source>
    </source>
</evidence>
<evidence type="ECO:0000303" key="7">
    <source>
    </source>
</evidence>
<evidence type="ECO:0000305" key="8"/>
<evidence type="ECO:0000305" key="9">
    <source>
    </source>
</evidence>
<keyword id="KW-0903">Direct protein sequencing</keyword>
<keyword id="KW-0325">Glycoprotein</keyword>
<keyword id="KW-0378">Hydrolase</keyword>
<keyword id="KW-0645">Protease</keyword>
<keyword id="KW-1185">Reference proteome</keyword>
<keyword id="KW-0964">Secreted</keyword>
<keyword id="KW-0720">Serine protease</keyword>
<keyword id="KW-0732">Signal</keyword>
<name>SUB2_PSED2</name>
<feature type="signal peptide" evidence="2">
    <location>
        <begin position="1"/>
        <end position="20"/>
    </location>
</feature>
<feature type="propeptide" id="PRO_0000434138" evidence="5">
    <location>
        <begin position="21"/>
        <end position="119"/>
    </location>
</feature>
<feature type="chain" id="PRO_0000434139" description="Subtilisin-like protease 2">
    <location>
        <begin position="120"/>
        <end position="400"/>
    </location>
</feature>
<feature type="domain" description="Inhibitor I9" evidence="2">
    <location>
        <begin position="42"/>
        <end position="117"/>
    </location>
</feature>
<feature type="domain" description="Peptidase S8" evidence="4">
    <location>
        <begin position="128"/>
        <end position="400"/>
    </location>
</feature>
<feature type="active site" description="Charge relay system" evidence="4">
    <location>
        <position position="160"/>
    </location>
</feature>
<feature type="active site" description="Charge relay system" evidence="4">
    <location>
        <position position="192"/>
    </location>
</feature>
<feature type="active site" description="Charge relay system" evidence="4">
    <location>
        <position position="345"/>
    </location>
</feature>
<feature type="site" description="Cleavage; by autocatalysis" evidence="9">
    <location>
        <begin position="119"/>
        <end position="120"/>
    </location>
</feature>
<feature type="glycosylation site" description="N-linked (GlcNAc...) asparagine" evidence="3">
    <location>
        <position position="82"/>
    </location>
</feature>
<protein>
    <recommendedName>
        <fullName evidence="1">Subtilisin-like protease 2</fullName>
        <ecNumber evidence="9">3.4.21.-</ecNumber>
    </recommendedName>
    <alternativeName>
        <fullName evidence="7">Destructin-1</fullName>
    </alternativeName>
    <alternativeName>
        <fullName evidence="6">Serine protease 2</fullName>
        <shortName evidence="6">PdSP2</shortName>
    </alternativeName>
</protein>